<name>DXR_MYCTU</name>
<dbReference type="EC" id="1.1.1.267" evidence="1"/>
<dbReference type="EMBL" id="AL123456">
    <property type="protein sequence ID" value="CCP45672.1"/>
    <property type="molecule type" value="Genomic_DNA"/>
</dbReference>
<dbReference type="PIR" id="A70923">
    <property type="entry name" value="A70923"/>
</dbReference>
<dbReference type="RefSeq" id="NP_217386.2">
    <property type="nucleotide sequence ID" value="NC_000962.3"/>
</dbReference>
<dbReference type="RefSeq" id="WP_003414613.1">
    <property type="nucleotide sequence ID" value="NZ_NVQJ01000006.1"/>
</dbReference>
<dbReference type="PDB" id="2C82">
    <property type="method" value="X-ray"/>
    <property type="resolution" value="1.90 A"/>
    <property type="chains" value="A/B=1-413"/>
</dbReference>
<dbReference type="PDB" id="2JCV">
    <property type="method" value="X-ray"/>
    <property type="resolution" value="2.20 A"/>
    <property type="chains" value="A/B=2-389"/>
</dbReference>
<dbReference type="PDB" id="2JCX">
    <property type="method" value="X-ray"/>
    <property type="resolution" value="2.10 A"/>
    <property type="chains" value="A/B=2-389"/>
</dbReference>
<dbReference type="PDB" id="2JCY">
    <property type="method" value="X-ray"/>
    <property type="resolution" value="2.35 A"/>
    <property type="chains" value="A/B=2-389"/>
</dbReference>
<dbReference type="PDB" id="2JD0">
    <property type="method" value="X-ray"/>
    <property type="resolution" value="2.30 A"/>
    <property type="chains" value="A/B=2-389"/>
</dbReference>
<dbReference type="PDB" id="2JD1">
    <property type="method" value="X-ray"/>
    <property type="resolution" value="2.00 A"/>
    <property type="chains" value="A/B=2-389"/>
</dbReference>
<dbReference type="PDB" id="2JD2">
    <property type="method" value="X-ray"/>
    <property type="resolution" value="2.15 A"/>
    <property type="chains" value="A/B=2-389"/>
</dbReference>
<dbReference type="PDB" id="2Y1C">
    <property type="method" value="X-ray"/>
    <property type="resolution" value="1.90 A"/>
    <property type="chains" value="A/B=2-389"/>
</dbReference>
<dbReference type="PDB" id="2Y1D">
    <property type="method" value="X-ray"/>
    <property type="resolution" value="2.05 A"/>
    <property type="chains" value="A/B=2-389"/>
</dbReference>
<dbReference type="PDB" id="2Y1E">
    <property type="method" value="X-ray"/>
    <property type="resolution" value="1.65 A"/>
    <property type="chains" value="A/B=2-389"/>
</dbReference>
<dbReference type="PDB" id="2Y1F">
    <property type="method" value="X-ray"/>
    <property type="resolution" value="1.96 A"/>
    <property type="chains" value="A/B=2-389"/>
</dbReference>
<dbReference type="PDB" id="2Y1G">
    <property type="method" value="X-ray"/>
    <property type="resolution" value="1.95 A"/>
    <property type="chains" value="A/B=2-389"/>
</dbReference>
<dbReference type="PDB" id="3RAS">
    <property type="method" value="X-ray"/>
    <property type="resolution" value="2.55 A"/>
    <property type="chains" value="A/B=2-389"/>
</dbReference>
<dbReference type="PDB" id="3ZHX">
    <property type="method" value="X-ray"/>
    <property type="resolution" value="2.00 A"/>
    <property type="chains" value="A/B=2-389"/>
</dbReference>
<dbReference type="PDB" id="3ZHY">
    <property type="method" value="X-ray"/>
    <property type="resolution" value="2.30 A"/>
    <property type="chains" value="A/B=2-389"/>
</dbReference>
<dbReference type="PDB" id="3ZHZ">
    <property type="method" value="X-ray"/>
    <property type="resolution" value="2.25 A"/>
    <property type="chains" value="A/B=2-389"/>
</dbReference>
<dbReference type="PDB" id="3ZI0">
    <property type="method" value="X-ray"/>
    <property type="resolution" value="1.90 A"/>
    <property type="chains" value="A/B=2-389"/>
</dbReference>
<dbReference type="PDB" id="4A03">
    <property type="method" value="X-ray"/>
    <property type="resolution" value="1.65 A"/>
    <property type="chains" value="A/B=2-389"/>
</dbReference>
<dbReference type="PDB" id="4AIC">
    <property type="method" value="X-ray"/>
    <property type="resolution" value="2.05 A"/>
    <property type="chains" value="A/B=2-389"/>
</dbReference>
<dbReference type="PDB" id="4OOE">
    <property type="method" value="X-ray"/>
    <property type="resolution" value="1.83 A"/>
    <property type="chains" value="A/B/C/D=1-389"/>
</dbReference>
<dbReference type="PDB" id="4OOF">
    <property type="method" value="X-ray"/>
    <property type="resolution" value="2.30 A"/>
    <property type="chains" value="A/B=1-389"/>
</dbReference>
<dbReference type="PDB" id="4RCV">
    <property type="method" value="X-ray"/>
    <property type="resolution" value="2.29 A"/>
    <property type="chains" value="A/B=1-389"/>
</dbReference>
<dbReference type="PDBsum" id="2C82"/>
<dbReference type="PDBsum" id="2JCV"/>
<dbReference type="PDBsum" id="2JCX"/>
<dbReference type="PDBsum" id="2JCY"/>
<dbReference type="PDBsum" id="2JD0"/>
<dbReference type="PDBsum" id="2JD1"/>
<dbReference type="PDBsum" id="2JD2"/>
<dbReference type="PDBsum" id="2Y1C"/>
<dbReference type="PDBsum" id="2Y1D"/>
<dbReference type="PDBsum" id="2Y1E"/>
<dbReference type="PDBsum" id="2Y1F"/>
<dbReference type="PDBsum" id="2Y1G"/>
<dbReference type="PDBsum" id="3RAS"/>
<dbReference type="PDBsum" id="3ZHX"/>
<dbReference type="PDBsum" id="3ZHY"/>
<dbReference type="PDBsum" id="3ZHZ"/>
<dbReference type="PDBsum" id="3ZI0"/>
<dbReference type="PDBsum" id="4A03"/>
<dbReference type="PDBsum" id="4AIC"/>
<dbReference type="PDBsum" id="4OOE"/>
<dbReference type="PDBsum" id="4OOF"/>
<dbReference type="PDBsum" id="4RCV"/>
<dbReference type="SMR" id="P9WNS1"/>
<dbReference type="FunCoup" id="P9WNS1">
    <property type="interactions" value="295"/>
</dbReference>
<dbReference type="STRING" id="83332.Rv2870c"/>
<dbReference type="BindingDB" id="P9WNS1"/>
<dbReference type="ChEMBL" id="CHEMBL5630"/>
<dbReference type="SwissLipids" id="SLP:000001174"/>
<dbReference type="PaxDb" id="83332-Rv2870c"/>
<dbReference type="DNASU" id="887800"/>
<dbReference type="GeneID" id="45426858"/>
<dbReference type="GeneID" id="887800"/>
<dbReference type="KEGG" id="mtu:Rv2870c"/>
<dbReference type="KEGG" id="mtv:RVBD_2870c"/>
<dbReference type="TubercuList" id="Rv2870c"/>
<dbReference type="eggNOG" id="COG0743">
    <property type="taxonomic scope" value="Bacteria"/>
</dbReference>
<dbReference type="InParanoid" id="P9WNS1"/>
<dbReference type="OrthoDB" id="9806546at2"/>
<dbReference type="PhylomeDB" id="P9WNS1"/>
<dbReference type="BRENDA" id="1.1.1.267">
    <property type="organism ID" value="3445"/>
</dbReference>
<dbReference type="UniPathway" id="UPA00056">
    <property type="reaction ID" value="UER00092"/>
</dbReference>
<dbReference type="EvolutionaryTrace" id="P9WNS1"/>
<dbReference type="Proteomes" id="UP000001584">
    <property type="component" value="Chromosome"/>
</dbReference>
<dbReference type="GO" id="GO:0030604">
    <property type="term" value="F:1-deoxy-D-xylulose-5-phosphate reductoisomerase activity"/>
    <property type="evidence" value="ECO:0000314"/>
    <property type="project" value="MTBBASE"/>
</dbReference>
<dbReference type="GO" id="GO:0050897">
    <property type="term" value="F:cobalt ion binding"/>
    <property type="evidence" value="ECO:0000314"/>
    <property type="project" value="MTBBASE"/>
</dbReference>
<dbReference type="GO" id="GO:0000287">
    <property type="term" value="F:magnesium ion binding"/>
    <property type="evidence" value="ECO:0000314"/>
    <property type="project" value="MTBBASE"/>
</dbReference>
<dbReference type="GO" id="GO:0030145">
    <property type="term" value="F:manganese ion binding"/>
    <property type="evidence" value="ECO:0000314"/>
    <property type="project" value="MTBBASE"/>
</dbReference>
<dbReference type="GO" id="GO:0070402">
    <property type="term" value="F:NADPH binding"/>
    <property type="evidence" value="ECO:0000314"/>
    <property type="project" value="MTBBASE"/>
</dbReference>
<dbReference type="GO" id="GO:0051484">
    <property type="term" value="P:isopentenyl diphosphate biosynthetic process, methylerythritol 4-phosphate pathway involved in terpenoid biosynthetic process"/>
    <property type="evidence" value="ECO:0000314"/>
    <property type="project" value="MTBBASE"/>
</dbReference>
<dbReference type="GO" id="GO:0051483">
    <property type="term" value="P:terpenoid biosynthetic process, mevalonate-independent"/>
    <property type="evidence" value="ECO:0000315"/>
    <property type="project" value="MTBBASE"/>
</dbReference>
<dbReference type="FunFam" id="1.10.1740.10:FF:000024">
    <property type="entry name" value="1-deoxy-D-xylulose 5-phosphate reductoisomerase"/>
    <property type="match status" value="1"/>
</dbReference>
<dbReference type="FunFam" id="3.40.50.720:FF:000045">
    <property type="entry name" value="1-deoxy-D-xylulose 5-phosphate reductoisomerase"/>
    <property type="match status" value="1"/>
</dbReference>
<dbReference type="Gene3D" id="1.10.1740.10">
    <property type="match status" value="1"/>
</dbReference>
<dbReference type="Gene3D" id="3.40.50.720">
    <property type="entry name" value="NAD(P)-binding Rossmann-like Domain"/>
    <property type="match status" value="1"/>
</dbReference>
<dbReference type="HAMAP" id="MF_00183">
    <property type="entry name" value="DXP_reductoisom"/>
    <property type="match status" value="1"/>
</dbReference>
<dbReference type="InterPro" id="IPR003821">
    <property type="entry name" value="DXP_reductoisomerase"/>
</dbReference>
<dbReference type="InterPro" id="IPR013644">
    <property type="entry name" value="DXP_reductoisomerase_C"/>
</dbReference>
<dbReference type="InterPro" id="IPR013512">
    <property type="entry name" value="DXP_reductoisomerase_N"/>
</dbReference>
<dbReference type="InterPro" id="IPR026877">
    <property type="entry name" value="DXPR_C"/>
</dbReference>
<dbReference type="InterPro" id="IPR036169">
    <property type="entry name" value="DXPR_C_sf"/>
</dbReference>
<dbReference type="InterPro" id="IPR036291">
    <property type="entry name" value="NAD(P)-bd_dom_sf"/>
</dbReference>
<dbReference type="NCBIfam" id="TIGR00243">
    <property type="entry name" value="Dxr"/>
    <property type="match status" value="1"/>
</dbReference>
<dbReference type="PANTHER" id="PTHR30525">
    <property type="entry name" value="1-DEOXY-D-XYLULOSE 5-PHOSPHATE REDUCTOISOMERASE"/>
    <property type="match status" value="1"/>
</dbReference>
<dbReference type="PANTHER" id="PTHR30525:SF0">
    <property type="entry name" value="1-DEOXY-D-XYLULOSE 5-PHOSPHATE REDUCTOISOMERASE, CHLOROPLASTIC"/>
    <property type="match status" value="1"/>
</dbReference>
<dbReference type="Pfam" id="PF08436">
    <property type="entry name" value="DXP_redisom_C"/>
    <property type="match status" value="1"/>
</dbReference>
<dbReference type="Pfam" id="PF02670">
    <property type="entry name" value="DXP_reductoisom"/>
    <property type="match status" value="1"/>
</dbReference>
<dbReference type="Pfam" id="PF13288">
    <property type="entry name" value="DXPR_C"/>
    <property type="match status" value="1"/>
</dbReference>
<dbReference type="PIRSF" id="PIRSF006205">
    <property type="entry name" value="Dxp_reductismrs"/>
    <property type="match status" value="1"/>
</dbReference>
<dbReference type="SUPFAM" id="SSF69055">
    <property type="entry name" value="1-deoxy-D-xylulose-5-phosphate reductoisomerase, C-terminal domain"/>
    <property type="match status" value="1"/>
</dbReference>
<dbReference type="SUPFAM" id="SSF55347">
    <property type="entry name" value="Glyceraldehyde-3-phosphate dehydrogenase-like, C-terminal domain"/>
    <property type="match status" value="1"/>
</dbReference>
<dbReference type="SUPFAM" id="SSF51735">
    <property type="entry name" value="NAD(P)-binding Rossmann-fold domains"/>
    <property type="match status" value="1"/>
</dbReference>
<protein>
    <recommendedName>
        <fullName evidence="1">1-deoxy-D-xylulose 5-phosphate reductoisomerase</fullName>
        <shortName evidence="1">DXP reductoisomerase</shortName>
        <ecNumber evidence="1">1.1.1.267</ecNumber>
    </recommendedName>
    <alternativeName>
        <fullName evidence="1">1-deoxyxylulose-5-phosphate reductoisomerase</fullName>
    </alternativeName>
    <alternativeName>
        <fullName evidence="1">2-C-methyl-D-erythritol 4-phosphate synthase</fullName>
    </alternativeName>
</protein>
<feature type="chain" id="PRO_0000163678" description="1-deoxy-D-xylulose 5-phosphate reductoisomerase">
    <location>
        <begin position="1"/>
        <end position="413"/>
    </location>
</feature>
<feature type="binding site" evidence="1">
    <location>
        <position position="21"/>
    </location>
    <ligand>
        <name>NADPH</name>
        <dbReference type="ChEBI" id="CHEBI:57783"/>
    </ligand>
</feature>
<feature type="binding site" evidence="1">
    <location>
        <position position="22"/>
    </location>
    <ligand>
        <name>NADPH</name>
        <dbReference type="ChEBI" id="CHEBI:57783"/>
    </ligand>
</feature>
<feature type="binding site" evidence="1">
    <location>
        <position position="23"/>
    </location>
    <ligand>
        <name>NADPH</name>
        <dbReference type="ChEBI" id="CHEBI:57783"/>
    </ligand>
</feature>
<feature type="binding site" evidence="1">
    <location>
        <position position="24"/>
    </location>
    <ligand>
        <name>NADPH</name>
        <dbReference type="ChEBI" id="CHEBI:57783"/>
    </ligand>
</feature>
<feature type="binding site" evidence="1">
    <location>
        <position position="47"/>
    </location>
    <ligand>
        <name>NADPH</name>
        <dbReference type="ChEBI" id="CHEBI:57783"/>
    </ligand>
</feature>
<feature type="binding site" evidence="1">
    <location>
        <position position="127"/>
    </location>
    <ligand>
        <name>NADPH</name>
        <dbReference type="ChEBI" id="CHEBI:57783"/>
    </ligand>
</feature>
<feature type="binding site" evidence="1">
    <location>
        <position position="128"/>
    </location>
    <ligand>
        <name>1-deoxy-D-xylulose 5-phosphate</name>
        <dbReference type="ChEBI" id="CHEBI:57792"/>
    </ligand>
</feature>
<feature type="binding site" evidence="1">
    <location>
        <position position="129"/>
    </location>
    <ligand>
        <name>NADPH</name>
        <dbReference type="ChEBI" id="CHEBI:57783"/>
    </ligand>
</feature>
<feature type="binding site" evidence="1">
    <location>
        <position position="151"/>
    </location>
    <ligand>
        <name>Mn(2+)</name>
        <dbReference type="ChEBI" id="CHEBI:29035"/>
    </ligand>
</feature>
<feature type="binding site" evidence="1">
    <location>
        <position position="152"/>
    </location>
    <ligand>
        <name>1-deoxy-D-xylulose 5-phosphate</name>
        <dbReference type="ChEBI" id="CHEBI:57792"/>
    </ligand>
</feature>
<feature type="binding site" evidence="1">
    <location>
        <position position="153"/>
    </location>
    <ligand>
        <name>1-deoxy-D-xylulose 5-phosphate</name>
        <dbReference type="ChEBI" id="CHEBI:57792"/>
    </ligand>
</feature>
<feature type="binding site" evidence="1">
    <location>
        <position position="153"/>
    </location>
    <ligand>
        <name>Mn(2+)</name>
        <dbReference type="ChEBI" id="CHEBI:29035"/>
    </ligand>
</feature>
<feature type="binding site" evidence="1">
    <location>
        <position position="177"/>
    </location>
    <ligand>
        <name>1-deoxy-D-xylulose 5-phosphate</name>
        <dbReference type="ChEBI" id="CHEBI:57792"/>
    </ligand>
</feature>
<feature type="binding site" evidence="1">
    <location>
        <position position="200"/>
    </location>
    <ligand>
        <name>1-deoxy-D-xylulose 5-phosphate</name>
        <dbReference type="ChEBI" id="CHEBI:57792"/>
    </ligand>
</feature>
<feature type="binding site" evidence="1">
    <location>
        <position position="206"/>
    </location>
    <ligand>
        <name>NADPH</name>
        <dbReference type="ChEBI" id="CHEBI:57783"/>
    </ligand>
</feature>
<feature type="binding site" evidence="1">
    <location>
        <position position="213"/>
    </location>
    <ligand>
        <name>1-deoxy-D-xylulose 5-phosphate</name>
        <dbReference type="ChEBI" id="CHEBI:57792"/>
    </ligand>
</feature>
<feature type="binding site" evidence="1">
    <location>
        <position position="218"/>
    </location>
    <ligand>
        <name>1-deoxy-D-xylulose 5-phosphate</name>
        <dbReference type="ChEBI" id="CHEBI:57792"/>
    </ligand>
</feature>
<feature type="binding site" evidence="1">
    <location>
        <position position="219"/>
    </location>
    <ligand>
        <name>1-deoxy-D-xylulose 5-phosphate</name>
        <dbReference type="ChEBI" id="CHEBI:57792"/>
    </ligand>
</feature>
<feature type="binding site" evidence="1">
    <location>
        <position position="222"/>
    </location>
    <ligand>
        <name>1-deoxy-D-xylulose 5-phosphate</name>
        <dbReference type="ChEBI" id="CHEBI:57792"/>
    </ligand>
</feature>
<feature type="binding site" evidence="1">
    <location>
        <position position="222"/>
    </location>
    <ligand>
        <name>Mn(2+)</name>
        <dbReference type="ChEBI" id="CHEBI:29035"/>
    </ligand>
</feature>
<feature type="strand" evidence="5">
    <location>
        <begin position="13"/>
        <end position="18"/>
    </location>
</feature>
<feature type="turn" evidence="5">
    <location>
        <begin position="19"/>
        <end position="21"/>
    </location>
</feature>
<feature type="helix" evidence="5">
    <location>
        <begin position="23"/>
        <end position="34"/>
    </location>
</feature>
<feature type="turn" evidence="5">
    <location>
        <begin position="36"/>
        <end position="38"/>
    </location>
</feature>
<feature type="strand" evidence="5">
    <location>
        <begin position="39"/>
        <end position="46"/>
    </location>
</feature>
<feature type="helix" evidence="4">
    <location>
        <begin position="48"/>
        <end position="50"/>
    </location>
</feature>
<feature type="helix" evidence="5">
    <location>
        <begin position="51"/>
        <end position="61"/>
    </location>
</feature>
<feature type="strand" evidence="5">
    <location>
        <begin position="66"/>
        <end position="69"/>
    </location>
</feature>
<feature type="helix" evidence="5">
    <location>
        <begin position="71"/>
        <end position="77"/>
    </location>
</feature>
<feature type="strand" evidence="5">
    <location>
        <begin position="81"/>
        <end position="84"/>
    </location>
</feature>
<feature type="helix" evidence="5">
    <location>
        <begin position="87"/>
        <end position="93"/>
    </location>
</feature>
<feature type="strand" evidence="5">
    <location>
        <begin position="98"/>
        <end position="102"/>
    </location>
</feature>
<feature type="helix" evidence="5">
    <location>
        <begin position="107"/>
        <end position="109"/>
    </location>
</feature>
<feature type="helix" evidence="5">
    <location>
        <begin position="110"/>
        <end position="119"/>
    </location>
</feature>
<feature type="strand" evidence="5">
    <location>
        <begin position="122"/>
        <end position="125"/>
    </location>
</feature>
<feature type="helix" evidence="5">
    <location>
        <begin position="128"/>
        <end position="134"/>
    </location>
</feature>
<feature type="helix" evidence="5">
    <location>
        <begin position="136"/>
        <end position="141"/>
    </location>
</feature>
<feature type="turn" evidence="2">
    <location>
        <begin position="144"/>
        <end position="146"/>
    </location>
</feature>
<feature type="strand" evidence="5">
    <location>
        <begin position="147"/>
        <end position="149"/>
    </location>
</feature>
<feature type="helix" evidence="5">
    <location>
        <begin position="152"/>
        <end position="160"/>
    </location>
</feature>
<feature type="helix" evidence="5">
    <location>
        <begin position="161"/>
        <end position="163"/>
    </location>
</feature>
<feature type="helix" evidence="5">
    <location>
        <begin position="166"/>
        <end position="168"/>
    </location>
</feature>
<feature type="strand" evidence="5">
    <location>
        <begin position="169"/>
        <end position="176"/>
    </location>
</feature>
<feature type="turn" evidence="5">
    <location>
        <begin position="180"/>
        <end position="183"/>
    </location>
</feature>
<feature type="helix" evidence="5">
    <location>
        <begin position="186"/>
        <end position="189"/>
    </location>
</feature>
<feature type="helix" evidence="5">
    <location>
        <begin position="194"/>
        <end position="197"/>
    </location>
</feature>
<feature type="strand" evidence="3">
    <location>
        <begin position="203"/>
        <end position="205"/>
    </location>
</feature>
<feature type="helix" evidence="5">
    <location>
        <begin position="207"/>
        <end position="215"/>
    </location>
</feature>
<feature type="helix" evidence="5">
    <location>
        <begin position="217"/>
        <end position="230"/>
    </location>
</feature>
<feature type="helix" evidence="5">
    <location>
        <begin position="234"/>
        <end position="236"/>
    </location>
</feature>
<feature type="strand" evidence="5">
    <location>
        <begin position="237"/>
        <end position="241"/>
    </location>
</feature>
<feature type="strand" evidence="5">
    <location>
        <begin position="247"/>
        <end position="253"/>
    </location>
</feature>
<feature type="strand" evidence="5">
    <location>
        <begin position="258"/>
        <end position="262"/>
    </location>
</feature>
<feature type="helix" evidence="5">
    <location>
        <begin position="268"/>
        <end position="276"/>
    </location>
</feature>
<feature type="strand" evidence="5">
    <location>
        <begin position="294"/>
        <end position="299"/>
    </location>
</feature>
<feature type="turn" evidence="5">
    <location>
        <begin position="303"/>
        <end position="305"/>
    </location>
</feature>
<feature type="helix" evidence="5">
    <location>
        <begin position="308"/>
        <end position="318"/>
    </location>
</feature>
<feature type="helix" evidence="5">
    <location>
        <begin position="322"/>
        <end position="338"/>
    </location>
</feature>
<feature type="helix" evidence="5">
    <location>
        <begin position="346"/>
        <end position="356"/>
    </location>
</feature>
<feature type="helix" evidence="5">
    <location>
        <begin position="359"/>
        <end position="361"/>
    </location>
</feature>
<feature type="helix" evidence="5">
    <location>
        <begin position="368"/>
        <end position="386"/>
    </location>
</feature>
<organism>
    <name type="scientific">Mycobacterium tuberculosis (strain ATCC 25618 / H37Rv)</name>
    <dbReference type="NCBI Taxonomy" id="83332"/>
    <lineage>
        <taxon>Bacteria</taxon>
        <taxon>Bacillati</taxon>
        <taxon>Actinomycetota</taxon>
        <taxon>Actinomycetes</taxon>
        <taxon>Mycobacteriales</taxon>
        <taxon>Mycobacteriaceae</taxon>
        <taxon>Mycobacterium</taxon>
        <taxon>Mycobacterium tuberculosis complex</taxon>
    </lineage>
</organism>
<accession>P9WNS1</accession>
<accession>L0TDT3</accession>
<accession>P64012</accession>
<accession>Q10798</accession>
<comment type="function">
    <text evidence="1">Catalyzes the NADPH-dependent rearrangement and reduction of 1-deoxy-D-xylulose-5-phosphate (DXP) to 2-C-methyl-D-erythritol 4-phosphate (MEP).</text>
</comment>
<comment type="catalytic activity">
    <reaction evidence="1">
        <text>2-C-methyl-D-erythritol 4-phosphate + NADP(+) = 1-deoxy-D-xylulose 5-phosphate + NADPH + H(+)</text>
        <dbReference type="Rhea" id="RHEA:13717"/>
        <dbReference type="ChEBI" id="CHEBI:15378"/>
        <dbReference type="ChEBI" id="CHEBI:57783"/>
        <dbReference type="ChEBI" id="CHEBI:57792"/>
        <dbReference type="ChEBI" id="CHEBI:58262"/>
        <dbReference type="ChEBI" id="CHEBI:58349"/>
        <dbReference type="EC" id="1.1.1.267"/>
    </reaction>
    <physiologicalReaction direction="right-to-left" evidence="1">
        <dbReference type="Rhea" id="RHEA:13719"/>
    </physiologicalReaction>
</comment>
<comment type="cofactor">
    <cofactor evidence="1">
        <name>Mg(2+)</name>
        <dbReference type="ChEBI" id="CHEBI:18420"/>
    </cofactor>
    <cofactor evidence="1">
        <name>Mn(2+)</name>
        <dbReference type="ChEBI" id="CHEBI:29035"/>
    </cofactor>
</comment>
<comment type="pathway">
    <text evidence="1">Isoprenoid biosynthesis; isopentenyl diphosphate biosynthesis via DXP pathway; isopentenyl diphosphate from 1-deoxy-D-xylulose 5-phosphate: step 1/6.</text>
</comment>
<comment type="similarity">
    <text evidence="1">Belongs to the DXR family.</text>
</comment>
<evidence type="ECO:0000255" key="1">
    <source>
        <dbReference type="HAMAP-Rule" id="MF_00183"/>
    </source>
</evidence>
<evidence type="ECO:0007829" key="2">
    <source>
        <dbReference type="PDB" id="2JD2"/>
    </source>
</evidence>
<evidence type="ECO:0007829" key="3">
    <source>
        <dbReference type="PDB" id="3ZHX"/>
    </source>
</evidence>
<evidence type="ECO:0007829" key="4">
    <source>
        <dbReference type="PDB" id="3ZHZ"/>
    </source>
</evidence>
<evidence type="ECO:0007829" key="5">
    <source>
        <dbReference type="PDB" id="4A03"/>
    </source>
</evidence>
<reference key="1">
    <citation type="journal article" date="1998" name="Nature">
        <title>Deciphering the biology of Mycobacterium tuberculosis from the complete genome sequence.</title>
        <authorList>
            <person name="Cole S.T."/>
            <person name="Brosch R."/>
            <person name="Parkhill J."/>
            <person name="Garnier T."/>
            <person name="Churcher C.M."/>
            <person name="Harris D.E."/>
            <person name="Gordon S.V."/>
            <person name="Eiglmeier K."/>
            <person name="Gas S."/>
            <person name="Barry C.E. III"/>
            <person name="Tekaia F."/>
            <person name="Badcock K."/>
            <person name="Basham D."/>
            <person name="Brown D."/>
            <person name="Chillingworth T."/>
            <person name="Connor R."/>
            <person name="Davies R.M."/>
            <person name="Devlin K."/>
            <person name="Feltwell T."/>
            <person name="Gentles S."/>
            <person name="Hamlin N."/>
            <person name="Holroyd S."/>
            <person name="Hornsby T."/>
            <person name="Jagels K."/>
            <person name="Krogh A."/>
            <person name="McLean J."/>
            <person name="Moule S."/>
            <person name="Murphy L.D."/>
            <person name="Oliver S."/>
            <person name="Osborne J."/>
            <person name="Quail M.A."/>
            <person name="Rajandream M.A."/>
            <person name="Rogers J."/>
            <person name="Rutter S."/>
            <person name="Seeger K."/>
            <person name="Skelton S."/>
            <person name="Squares S."/>
            <person name="Squares R."/>
            <person name="Sulston J.E."/>
            <person name="Taylor K."/>
            <person name="Whitehead S."/>
            <person name="Barrell B.G."/>
        </authorList>
    </citation>
    <scope>NUCLEOTIDE SEQUENCE [LARGE SCALE GENOMIC DNA]</scope>
    <source>
        <strain>ATCC 25618 / H37Rv</strain>
    </source>
</reference>
<reference key="2">
    <citation type="journal article" date="2011" name="Mol. Cell. Proteomics">
        <title>Proteogenomic analysis of Mycobacterium tuberculosis by high resolution mass spectrometry.</title>
        <authorList>
            <person name="Kelkar D.S."/>
            <person name="Kumar D."/>
            <person name="Kumar P."/>
            <person name="Balakrishnan L."/>
            <person name="Muthusamy B."/>
            <person name="Yadav A.K."/>
            <person name="Shrivastava P."/>
            <person name="Marimuthu A."/>
            <person name="Anand S."/>
            <person name="Sundaram H."/>
            <person name="Kingsbury R."/>
            <person name="Harsha H.C."/>
            <person name="Nair B."/>
            <person name="Prasad T.S."/>
            <person name="Chauhan D.S."/>
            <person name="Katoch K."/>
            <person name="Katoch V.M."/>
            <person name="Kumar P."/>
            <person name="Chaerkady R."/>
            <person name="Ramachandran S."/>
            <person name="Dash D."/>
            <person name="Pandey A."/>
        </authorList>
    </citation>
    <scope>IDENTIFICATION BY MASS SPECTROMETRY [LARGE SCALE ANALYSIS]</scope>
    <source>
        <strain>ATCC 25618 / H37Rv</strain>
    </source>
</reference>
<keyword id="KW-0002">3D-structure</keyword>
<keyword id="KW-0414">Isoprene biosynthesis</keyword>
<keyword id="KW-0464">Manganese</keyword>
<keyword id="KW-0479">Metal-binding</keyword>
<keyword id="KW-0521">NADP</keyword>
<keyword id="KW-0560">Oxidoreductase</keyword>
<keyword id="KW-1185">Reference proteome</keyword>
<gene>
    <name evidence="1" type="primary">dxr</name>
    <name type="ordered locus">Rv2870c</name>
    <name type="ORF">MTCY274.01c</name>
</gene>
<sequence>MTNSTDGRADGRLRVVVLGSTGSIGTQALQVIADNPDRFEVVGLAAGGAHLDTLLRQRAQTGVTNIAVADEHAAQRVGDIPYHGSDAATRLVEQTEADVVLNALVGALGLRPTLAALKTGARLALANKESLVAGGSLVLRAARPGQIVPVDSEHSALAQCLRGGTPDEVAKLVLTASGGPFRGWSAADLEHVTPEQAGAHPTWSMGPMNTLNSASLVNKGLEVIETHLLFGIPYDRIDVVVHPQSIIHSMVTFIDGSTIAQASPPDMKLPISLALGWPRRVSGAAAACDFHTASSWEFEPLDTDVFPAVELARQAGVAGGCMTAVYNAANEEAAAAFLAGRIGFPAIVGIIADVLHAADQWAVEPATVDDVLDAQRWARERAQRAVSGMASVAIASTAKPGAAGRHASTLERS</sequence>
<proteinExistence type="evidence at protein level"/>